<accession>Q8XB36</accession>
<dbReference type="EC" id="4.1.2.4" evidence="1"/>
<dbReference type="EMBL" id="AE005174">
    <property type="protein sequence ID" value="AAG59562.1"/>
    <property type="molecule type" value="Genomic_DNA"/>
</dbReference>
<dbReference type="EMBL" id="BA000007">
    <property type="protein sequence ID" value="BAB38763.1"/>
    <property type="molecule type" value="Genomic_DNA"/>
</dbReference>
<dbReference type="PIR" id="D91296">
    <property type="entry name" value="D91296"/>
</dbReference>
<dbReference type="PIR" id="F86137">
    <property type="entry name" value="F86137"/>
</dbReference>
<dbReference type="RefSeq" id="NP_313367.1">
    <property type="nucleotide sequence ID" value="NC_002695.1"/>
</dbReference>
<dbReference type="RefSeq" id="WP_001295412.1">
    <property type="nucleotide sequence ID" value="NZ_VOAI01000002.1"/>
</dbReference>
<dbReference type="SMR" id="Q8XB36"/>
<dbReference type="STRING" id="155864.Z5983"/>
<dbReference type="GeneID" id="913508"/>
<dbReference type="GeneID" id="93777463"/>
<dbReference type="KEGG" id="ece:Z5983"/>
<dbReference type="KEGG" id="ecs:ECs_5340"/>
<dbReference type="PATRIC" id="fig|386585.9.peg.5586"/>
<dbReference type="eggNOG" id="COG0274">
    <property type="taxonomic scope" value="Bacteria"/>
</dbReference>
<dbReference type="HOGENOM" id="CLU_053595_3_1_6"/>
<dbReference type="OMA" id="MNACIPP"/>
<dbReference type="UniPathway" id="UPA00002">
    <property type="reaction ID" value="UER00468"/>
</dbReference>
<dbReference type="Proteomes" id="UP000000558">
    <property type="component" value="Chromosome"/>
</dbReference>
<dbReference type="Proteomes" id="UP000002519">
    <property type="component" value="Chromosome"/>
</dbReference>
<dbReference type="GO" id="GO:0005737">
    <property type="term" value="C:cytoplasm"/>
    <property type="evidence" value="ECO:0007669"/>
    <property type="project" value="UniProtKB-SubCell"/>
</dbReference>
<dbReference type="GO" id="GO:0004139">
    <property type="term" value="F:deoxyribose-phosphate aldolase activity"/>
    <property type="evidence" value="ECO:0007669"/>
    <property type="project" value="UniProtKB-UniRule"/>
</dbReference>
<dbReference type="GO" id="GO:0006018">
    <property type="term" value="P:2-deoxyribose 1-phosphate catabolic process"/>
    <property type="evidence" value="ECO:0007669"/>
    <property type="project" value="UniProtKB-UniRule"/>
</dbReference>
<dbReference type="GO" id="GO:0016052">
    <property type="term" value="P:carbohydrate catabolic process"/>
    <property type="evidence" value="ECO:0007669"/>
    <property type="project" value="TreeGrafter"/>
</dbReference>
<dbReference type="GO" id="GO:0009264">
    <property type="term" value="P:deoxyribonucleotide catabolic process"/>
    <property type="evidence" value="ECO:0007669"/>
    <property type="project" value="InterPro"/>
</dbReference>
<dbReference type="CDD" id="cd00959">
    <property type="entry name" value="DeoC"/>
    <property type="match status" value="1"/>
</dbReference>
<dbReference type="FunFam" id="3.20.20.70:FF:000034">
    <property type="entry name" value="Deoxyribose-phosphate aldolase"/>
    <property type="match status" value="1"/>
</dbReference>
<dbReference type="Gene3D" id="3.20.20.70">
    <property type="entry name" value="Aldolase class I"/>
    <property type="match status" value="1"/>
</dbReference>
<dbReference type="HAMAP" id="MF_00592">
    <property type="entry name" value="DeoC_type2"/>
    <property type="match status" value="1"/>
</dbReference>
<dbReference type="InterPro" id="IPR013785">
    <property type="entry name" value="Aldolase_TIM"/>
</dbReference>
<dbReference type="InterPro" id="IPR011343">
    <property type="entry name" value="DeoC"/>
</dbReference>
<dbReference type="InterPro" id="IPR002915">
    <property type="entry name" value="DeoC/FbaB/LacD_aldolase"/>
</dbReference>
<dbReference type="InterPro" id="IPR023649">
    <property type="entry name" value="DeoC_typeII"/>
</dbReference>
<dbReference type="NCBIfam" id="TIGR00126">
    <property type="entry name" value="deoC"/>
    <property type="match status" value="1"/>
</dbReference>
<dbReference type="PANTHER" id="PTHR10889">
    <property type="entry name" value="DEOXYRIBOSE-PHOSPHATE ALDOLASE"/>
    <property type="match status" value="1"/>
</dbReference>
<dbReference type="PANTHER" id="PTHR10889:SF3">
    <property type="entry name" value="DEOXYRIBOSE-PHOSPHATE ALDOLASE"/>
    <property type="match status" value="1"/>
</dbReference>
<dbReference type="Pfam" id="PF01791">
    <property type="entry name" value="DeoC"/>
    <property type="match status" value="1"/>
</dbReference>
<dbReference type="PIRSF" id="PIRSF001357">
    <property type="entry name" value="DeoC"/>
    <property type="match status" value="1"/>
</dbReference>
<dbReference type="SMART" id="SM01133">
    <property type="entry name" value="DeoC"/>
    <property type="match status" value="1"/>
</dbReference>
<dbReference type="SUPFAM" id="SSF51569">
    <property type="entry name" value="Aldolase"/>
    <property type="match status" value="1"/>
</dbReference>
<protein>
    <recommendedName>
        <fullName evidence="1">Deoxyribose-phosphate aldolase</fullName>
        <shortName evidence="1">DERA</shortName>
        <ecNumber evidence="1">4.1.2.4</ecNumber>
    </recommendedName>
    <alternativeName>
        <fullName evidence="1">2-deoxy-D-ribose 5-phosphate aldolase</fullName>
    </alternativeName>
    <alternativeName>
        <fullName evidence="1">Phosphodeoxyriboaldolase</fullName>
        <shortName evidence="1">Deoxyriboaldolase</shortName>
    </alternativeName>
</protein>
<proteinExistence type="inferred from homology"/>
<name>DEOC_ECO57</name>
<keyword id="KW-0963">Cytoplasm</keyword>
<keyword id="KW-0456">Lyase</keyword>
<keyword id="KW-1185">Reference proteome</keyword>
<keyword id="KW-0704">Schiff base</keyword>
<comment type="function">
    <text evidence="1">Catalyzes a reversible aldol reaction between acetaldehyde and D-glyceraldehyde 3-phosphate to generate 2-deoxy-D-ribose 5-phosphate.</text>
</comment>
<comment type="catalytic activity">
    <reaction evidence="1">
        <text>2-deoxy-D-ribose 5-phosphate = D-glyceraldehyde 3-phosphate + acetaldehyde</text>
        <dbReference type="Rhea" id="RHEA:12821"/>
        <dbReference type="ChEBI" id="CHEBI:15343"/>
        <dbReference type="ChEBI" id="CHEBI:59776"/>
        <dbReference type="ChEBI" id="CHEBI:62877"/>
        <dbReference type="EC" id="4.1.2.4"/>
    </reaction>
</comment>
<comment type="pathway">
    <text evidence="1">Carbohydrate degradation; 2-deoxy-D-ribose 1-phosphate degradation; D-glyceraldehyde 3-phosphate and acetaldehyde from 2-deoxy-alpha-D-ribose 1-phosphate: step 2/2.</text>
</comment>
<comment type="subcellular location">
    <subcellularLocation>
        <location evidence="1">Cytoplasm</location>
    </subcellularLocation>
</comment>
<comment type="similarity">
    <text evidence="1 2">Belongs to the DeoC/FbaB aldolase family. DeoC type 2 subfamily.</text>
</comment>
<gene>
    <name evidence="1" type="primary">deoC</name>
    <name type="synonym">dra</name>
    <name type="synonym">thyR</name>
    <name type="ordered locus">Z5983</name>
    <name type="ordered locus">ECs5340</name>
</gene>
<reference key="1">
    <citation type="journal article" date="2001" name="Nature">
        <title>Genome sequence of enterohaemorrhagic Escherichia coli O157:H7.</title>
        <authorList>
            <person name="Perna N.T."/>
            <person name="Plunkett G. III"/>
            <person name="Burland V."/>
            <person name="Mau B."/>
            <person name="Glasner J.D."/>
            <person name="Rose D.J."/>
            <person name="Mayhew G.F."/>
            <person name="Evans P.S."/>
            <person name="Gregor J."/>
            <person name="Kirkpatrick H.A."/>
            <person name="Posfai G."/>
            <person name="Hackett J."/>
            <person name="Klink S."/>
            <person name="Boutin A."/>
            <person name="Shao Y."/>
            <person name="Miller L."/>
            <person name="Grotbeck E.J."/>
            <person name="Davis N.W."/>
            <person name="Lim A."/>
            <person name="Dimalanta E.T."/>
            <person name="Potamousis K."/>
            <person name="Apodaca J."/>
            <person name="Anantharaman T.S."/>
            <person name="Lin J."/>
            <person name="Yen G."/>
            <person name="Schwartz D.C."/>
            <person name="Welch R.A."/>
            <person name="Blattner F.R."/>
        </authorList>
    </citation>
    <scope>NUCLEOTIDE SEQUENCE [LARGE SCALE GENOMIC DNA]</scope>
    <source>
        <strain>O157:H7 / EDL933 / ATCC 700927 / EHEC</strain>
    </source>
</reference>
<reference key="2">
    <citation type="journal article" date="2001" name="DNA Res.">
        <title>Complete genome sequence of enterohemorrhagic Escherichia coli O157:H7 and genomic comparison with a laboratory strain K-12.</title>
        <authorList>
            <person name="Hayashi T."/>
            <person name="Makino K."/>
            <person name="Ohnishi M."/>
            <person name="Kurokawa K."/>
            <person name="Ishii K."/>
            <person name="Yokoyama K."/>
            <person name="Han C.-G."/>
            <person name="Ohtsubo E."/>
            <person name="Nakayama K."/>
            <person name="Murata T."/>
            <person name="Tanaka M."/>
            <person name="Tobe T."/>
            <person name="Iida T."/>
            <person name="Takami H."/>
            <person name="Honda T."/>
            <person name="Sasakawa C."/>
            <person name="Ogasawara N."/>
            <person name="Yasunaga T."/>
            <person name="Kuhara S."/>
            <person name="Shiba T."/>
            <person name="Hattori M."/>
            <person name="Shinagawa H."/>
        </authorList>
    </citation>
    <scope>NUCLEOTIDE SEQUENCE [LARGE SCALE GENOMIC DNA]</scope>
    <source>
        <strain>O157:H7 / Sakai / RIMD 0509952 / EHEC</strain>
    </source>
</reference>
<evidence type="ECO:0000255" key="1">
    <source>
        <dbReference type="HAMAP-Rule" id="MF_00592"/>
    </source>
</evidence>
<evidence type="ECO:0000305" key="2"/>
<sequence>MTDLKASSLRALKLMDLTTLNDDDTDEKVIALCHQAKTPVGNTAAICIYPRFIPIARKTLKEQGTPEIRIATVTNFPHGNDDIEIALAETRAAIAYGADEVDVVFPYRALMAGNEQVGFDLVKACKEACAAANVLLKVIIETGELKDEALIRKASEISIKAGADFIKTSTGKVAVNATPESARIMMEVIRDMGVEKTVGFKPAGGVRTAEDAQKYLAIADELFGADWADARHYRFGASSLLASLLKALGHGDGKSASSY</sequence>
<organism>
    <name type="scientific">Escherichia coli O157:H7</name>
    <dbReference type="NCBI Taxonomy" id="83334"/>
    <lineage>
        <taxon>Bacteria</taxon>
        <taxon>Pseudomonadati</taxon>
        <taxon>Pseudomonadota</taxon>
        <taxon>Gammaproteobacteria</taxon>
        <taxon>Enterobacterales</taxon>
        <taxon>Enterobacteriaceae</taxon>
        <taxon>Escherichia</taxon>
    </lineage>
</organism>
<feature type="chain" id="PRO_0000057298" description="Deoxyribose-phosphate aldolase">
    <location>
        <begin position="1"/>
        <end position="259"/>
    </location>
</feature>
<feature type="active site" description="Proton donor/acceptor" evidence="1">
    <location>
        <position position="102"/>
    </location>
</feature>
<feature type="active site" description="Schiff-base intermediate with acetaldehyde" evidence="1">
    <location>
        <position position="167"/>
    </location>
</feature>
<feature type="active site" description="Proton donor/acceptor" evidence="1">
    <location>
        <position position="201"/>
    </location>
</feature>